<protein>
    <recommendedName>
        <fullName>Anti-sigma-W factor RsiW</fullName>
    </recommendedName>
    <alternativeName>
        <fullName>Regulator of SigW</fullName>
    </alternativeName>
    <alternativeName>
        <fullName>Sigma-W anti-sigma factor RsiW</fullName>
    </alternativeName>
</protein>
<sequence length="208" mass="23341">MSCPEQIVQLMHMHLDGDILPKDEHVLNEHLETCEKCRKHFYEMEKSIALVRSTSHVEAPADFTANVMAKLPKEKKRASVKRWFRTHPVIAAAAVFIILMGGGFFNSWHNDHNFSVSKQPNLVVHNHTVTVPEGETVKGDVTVKNGKLIIKGKIDGDVTVVNGEKYMASAGQVTGQIEEINQLFDWTWYKMKSAGKSVLDAFNPNGEE</sequence>
<proteinExistence type="evidence at protein level"/>
<gene>
    <name type="primary">rsiW</name>
    <name type="synonym">ybbM</name>
    <name type="ordered locus">BSU01740</name>
</gene>
<organism>
    <name type="scientific">Bacillus subtilis (strain 168)</name>
    <dbReference type="NCBI Taxonomy" id="224308"/>
    <lineage>
        <taxon>Bacteria</taxon>
        <taxon>Bacillati</taxon>
        <taxon>Bacillota</taxon>
        <taxon>Bacilli</taxon>
        <taxon>Bacillales</taxon>
        <taxon>Bacillaceae</taxon>
        <taxon>Bacillus</taxon>
    </lineage>
</organism>
<name>RSIW_BACSU</name>
<evidence type="ECO:0000255" key="1"/>
<evidence type="ECO:0000269" key="2">
    <source>
    </source>
</evidence>
<evidence type="ECO:0000269" key="3">
    <source>
    </source>
</evidence>
<evidence type="ECO:0000269" key="4">
    <source>
    </source>
</evidence>
<evidence type="ECO:0000269" key="5">
    <source>
    </source>
</evidence>
<evidence type="ECO:0000269" key="6">
    <source>
    </source>
</evidence>
<evidence type="ECO:0000269" key="7">
    <source>
    </source>
</evidence>
<evidence type="ECO:0000269" key="8">
    <source>
    </source>
</evidence>
<evidence type="ECO:0000269" key="9">
    <source>
    </source>
</evidence>
<evidence type="ECO:0000269" key="10">
    <source>
    </source>
</evidence>
<evidence type="ECO:0000269" key="11">
    <source>
    </source>
</evidence>
<evidence type="ECO:0000269" key="12">
    <source>
    </source>
</evidence>
<evidence type="ECO:0000305" key="13"/>
<evidence type="ECO:0000305" key="14">
    <source>
    </source>
</evidence>
<evidence type="ECO:0000305" key="15">
    <source>
    </source>
</evidence>
<evidence type="ECO:0007744" key="16">
    <source>
        <dbReference type="PDB" id="5WUQ"/>
    </source>
</evidence>
<evidence type="ECO:0007744" key="17">
    <source>
        <dbReference type="PDB" id="5WUR"/>
    </source>
</evidence>
<evidence type="ECO:0007829" key="18">
    <source>
        <dbReference type="PDB" id="5WUR"/>
    </source>
</evidence>
<accession>Q45588</accession>
<accession>O08075</accession>
<accession>Q45586</accession>
<accession>Q7DL99</accession>
<comment type="function">
    <text evidence="4 5 7 8 9 11">The anti-sigma factor for extracytoplasmic function (ECF) sigma factor sigma-W (SigW). Holds SigW, its cognate ECF sigma factor, in an inactive form until released by regulated intramembrane proteolysis (RIP). SigW and RsiW mediate cell response to cell wall stress (PubMed:12207695). RIP occurs when an extracytoplasmic signal triggers a concerted proteolytic cascade to transmit information and elicit cellular responses. The membrane-spanning regulatory substrate protein is first cut periplasmically (site-1 protease, S1P, PrsW) (PubMed:16816000, PubMed:17020587), then within the membrane itself (site-2 protease, S2P, RasP) (PubMed:15130127), while cytoplasmic proteases finish degrading the anti-sigma factor, liberating sigma-W (PubMed:16899079).</text>
</comment>
<comment type="cofactor">
    <cofactor evidence="12">
        <name>Zn(2+)</name>
        <dbReference type="ChEBI" id="CHEBI:29105"/>
    </cofactor>
    <text evidence="12">Binds 1 Zn(2+) ion per subunit. Absence of the Zn(2+) (in a residue 1-80 fragment) does not prevent interaction with SigW, nor does it change the overall conformation of RsiW, although a disulfide bond can form between Cys-3 and Cys-37 (PubMed:28319136).</text>
</comment>
<comment type="subunit">
    <text evidence="12">Forms a heterodimer with cognate sigma factor SigW, which probably prevents SigW from binding to DNA (PubMed:28319136).</text>
</comment>
<comment type="subcellular location">
    <subcellularLocation>
        <location evidence="14">Cell membrane</location>
        <topology evidence="8">Single-pass membrane protein</topology>
    </subcellularLocation>
    <text evidence="8">Site-2 clipped RsiW is released from the membrane to the cytoplasm (PubMed:16899079).</text>
</comment>
<comment type="induction">
    <text evidence="2 3 4 6">By different stresses causing damage to the cell envelope, such as alkaline shock (PubMed:11454200), salt shock (PubMed:11544224), phage infection and certain antibiotics that affect cell wall biosynthesis (PubMed:12207695, PubMed:15870467).</text>
</comment>
<comment type="domain">
    <text evidence="5 12">The cytoplasmic domain is able to inactivate SigW and the extracellular and transmembrane domains are crucial for sensing and transducing the signal that triggers SigW activation (PubMed:15130127). The N-terminus binds the zinc ion and is followed by a long helix (about residues 40-80) that fits into a hydrophobic surface groove on SigW, probably blocking its ability to interact with the -10 and -35 promoter elements (PubMed:28319136).</text>
</comment>
<comment type="PTM">
    <text evidence="5 7 8 9 10">Is processed by successive proteolytic events. First, the extracellular region of RsiW is cleaved by PrsW (site-1 cleavage) in response to cell envelope stresses (PubMed:16816000, PubMed:17020587). In a reconstituted E.coli system PrsW cuts between Ala-168 and Ser-169 followed by trimming by E.coli Tsp; the endogenous extracellular exopeptidase responsible for the event in B.subtilis has not been identified (PubMed:19889088). Next, it undergoes cleavage at an intramembrane site (site-2 cleavage) mediated by RasP (PubMed:15130127). This cleavage uncovers a cryptic proteolytic tag with conserved alanine residues in the transmembrane segment, that is recognized mainly by the ClpXP protease, which completely degrades the protein in the cytoplasm and leads to the induction of the sigma-W-controlled genes (PubMed:16899079).</text>
</comment>
<comment type="similarity">
    <text evidence="13">Belongs to the zinc-associated anti-sigma factor (ZAS) superfamily. Anti-sigma-W factor family.</text>
</comment>
<comment type="sequence caution" evidence="13">
    <conflict type="frameshift">
        <sequence resource="EMBL-CDS" id="BAA19508"/>
    </conflict>
</comment>
<keyword id="KW-0002">3D-structure</keyword>
<keyword id="KW-1003">Cell membrane</keyword>
<keyword id="KW-0472">Membrane</keyword>
<keyword id="KW-0479">Metal-binding</keyword>
<keyword id="KW-1185">Reference proteome</keyword>
<keyword id="KW-0346">Stress response</keyword>
<keyword id="KW-0804">Transcription</keyword>
<keyword id="KW-0805">Transcription regulation</keyword>
<keyword id="KW-0812">Transmembrane</keyword>
<keyword id="KW-1133">Transmembrane helix</keyword>
<keyword id="KW-0862">Zinc</keyword>
<feature type="chain" id="PRO_0000097485" description="Anti-sigma-W factor RsiW">
    <location>
        <begin position="1"/>
        <end position="208"/>
    </location>
</feature>
<feature type="topological domain" description="Cytoplasmic" evidence="15">
    <location>
        <begin position="1"/>
        <end position="87"/>
    </location>
</feature>
<feature type="transmembrane region" description="Helical" evidence="1">
    <location>
        <begin position="88"/>
        <end position="108"/>
    </location>
</feature>
<feature type="topological domain" description="Extracellular" evidence="1">
    <location>
        <begin position="109"/>
        <end position="208"/>
    </location>
</feature>
<feature type="binding site" evidence="12">
    <location>
        <position position="3"/>
    </location>
    <ligand>
        <name>Zn(2+)</name>
        <dbReference type="ChEBI" id="CHEBI:29105"/>
    </ligand>
</feature>
<feature type="binding site" evidence="12">
    <location>
        <position position="30"/>
    </location>
    <ligand>
        <name>Zn(2+)</name>
        <dbReference type="ChEBI" id="CHEBI:29105"/>
    </ligand>
</feature>
<feature type="binding site" evidence="12">
    <location>
        <position position="34"/>
    </location>
    <ligand>
        <name>Zn(2+)</name>
        <dbReference type="ChEBI" id="CHEBI:29105"/>
    </ligand>
</feature>
<feature type="binding site" evidence="12">
    <location>
        <position position="37"/>
    </location>
    <ligand>
        <name>Zn(2+)</name>
        <dbReference type="ChEBI" id="CHEBI:29105"/>
    </ligand>
</feature>
<feature type="mutagenesis site" description="Partially inhibits SigW, confers low diamide induction. A swap mutant with RsrA of S.coelicolor." evidence="11">
    <original>VLNEHLETCEKCRKH</original>
    <variation>KFEHHFEECSPCLEK</variation>
    <location>
        <begin position="26"/>
        <end position="40"/>
    </location>
</feature>
<feature type="mutagenesis site" description="Abolishes induction of sigma-W-controlled genes." evidence="8">
    <original>AAAA</original>
    <variation>LLLL</variation>
    <location>
        <begin position="91"/>
        <end position="94"/>
    </location>
</feature>
<feature type="mutagenesis site" description="Abolishes induction of sigma-W-controlled genes." evidence="8">
    <original>AAA</original>
    <variation>LLL</variation>
    <location>
        <begin position="91"/>
        <end position="93"/>
    </location>
</feature>
<feature type="mutagenesis site" description="Abolishes induction of sigma-W-controlled genes." evidence="8">
    <original>AA</original>
    <variation>LL</variation>
    <location>
        <begin position="91"/>
        <end position="92"/>
    </location>
</feature>
<feature type="mutagenesis site" description="No effect." evidence="8">
    <original>A</original>
    <variation>L</variation>
    <location>
        <position position="91"/>
    </location>
</feature>
<feature type="mutagenesis site" description="No longer requires PrsW for degradation." evidence="10">
    <original>S</original>
    <variation>F</variation>
    <location>
        <position position="117"/>
    </location>
</feature>
<feature type="mutagenesis site" description="No longer requires PrsW for degradation." evidence="10">
    <original>V</original>
    <variation>M</variation>
    <location>
        <position position="129"/>
    </location>
</feature>
<feature type="mutagenesis site" description="No longer requires PrsW for degradation." evidence="10">
    <original>G</original>
    <variation>S</variation>
    <location>
        <position position="146"/>
    </location>
</feature>
<feature type="mutagenesis site" description="Retains anti-sigma-W activity, not degraded by PrsW." evidence="10">
    <original>A</original>
    <variation>Q</variation>
    <location>
        <position position="168"/>
    </location>
</feature>
<feature type="mutagenesis site" description="Wild-type; retains anti-sigma-W activity, degraded by PrsW." evidence="10">
    <original>S</original>
    <variation>Q</variation>
    <location>
        <position position="169"/>
    </location>
</feature>
<feature type="mutagenesis site" description="No longer requires PrsW for degradation." evidence="10">
    <original>G</original>
    <variation>D</variation>
    <location>
        <position position="175"/>
    </location>
</feature>
<feature type="mutagenesis site" description="No longer requires PrsW for degradation." evidence="10">
    <location>
        <begin position="188"/>
        <end position="208"/>
    </location>
</feature>
<feature type="mutagenesis site" description="No longer requires PrsW for degradation." evidence="10">
    <location>
        <begin position="199"/>
        <end position="208"/>
    </location>
</feature>
<feature type="mutagenesis site" description="Requires PrsW for degradation." evidence="10">
    <location>
        <begin position="204"/>
        <end position="208"/>
    </location>
</feature>
<feature type="helix" evidence="18">
    <location>
        <begin position="5"/>
        <end position="16"/>
    </location>
</feature>
<feature type="helix" evidence="18">
    <location>
        <begin position="21"/>
        <end position="33"/>
    </location>
</feature>
<feature type="helix" evidence="18">
    <location>
        <begin position="35"/>
        <end position="52"/>
    </location>
</feature>
<feature type="helix" evidence="18">
    <location>
        <begin position="63"/>
        <end position="69"/>
    </location>
</feature>
<dbReference type="EMBL" id="AB002150">
    <property type="protein sequence ID" value="BAA19508.1"/>
    <property type="status" value="ALT_FRAME"/>
    <property type="molecule type" value="Genomic_DNA"/>
</dbReference>
<dbReference type="EMBL" id="AL009126">
    <property type="protein sequence ID" value="CAB11950.1"/>
    <property type="molecule type" value="Genomic_DNA"/>
</dbReference>
<dbReference type="PIR" id="G69744">
    <property type="entry name" value="G69744"/>
</dbReference>
<dbReference type="RefSeq" id="NP_388055.1">
    <property type="nucleotide sequence ID" value="NC_000964.3"/>
</dbReference>
<dbReference type="RefSeq" id="WP_003234951.1">
    <property type="nucleotide sequence ID" value="NZ_OZ025638.1"/>
</dbReference>
<dbReference type="PDB" id="5WUQ">
    <property type="method" value="X-ray"/>
    <property type="resolution" value="2.80 A"/>
    <property type="chains" value="C/D=1-80"/>
</dbReference>
<dbReference type="PDB" id="5WUR">
    <property type="method" value="X-ray"/>
    <property type="resolution" value="2.60 A"/>
    <property type="chains" value="C/D=1-80"/>
</dbReference>
<dbReference type="PDBsum" id="5WUQ"/>
<dbReference type="PDBsum" id="5WUR"/>
<dbReference type="SMR" id="Q45588"/>
<dbReference type="FunCoup" id="Q45588">
    <property type="interactions" value="24"/>
</dbReference>
<dbReference type="IntAct" id="Q45588">
    <property type="interactions" value="1"/>
</dbReference>
<dbReference type="STRING" id="224308.BSU01740"/>
<dbReference type="PaxDb" id="224308-BSU01740"/>
<dbReference type="EnsemblBacteria" id="CAB11950">
    <property type="protein sequence ID" value="CAB11950"/>
    <property type="gene ID" value="BSU_01740"/>
</dbReference>
<dbReference type="GeneID" id="938876"/>
<dbReference type="KEGG" id="bsu:BSU01740"/>
<dbReference type="PATRIC" id="fig|224308.179.peg.180"/>
<dbReference type="eggNOG" id="COG5662">
    <property type="taxonomic scope" value="Bacteria"/>
</dbReference>
<dbReference type="InParanoid" id="Q45588"/>
<dbReference type="OrthoDB" id="9782842at2"/>
<dbReference type="BioCyc" id="BSUB:BSU01740-MONOMER"/>
<dbReference type="Proteomes" id="UP000001570">
    <property type="component" value="Chromosome"/>
</dbReference>
<dbReference type="GO" id="GO:0005886">
    <property type="term" value="C:plasma membrane"/>
    <property type="evidence" value="ECO:0007669"/>
    <property type="project" value="UniProtKB-SubCell"/>
</dbReference>
<dbReference type="GO" id="GO:0046872">
    <property type="term" value="F:metal ion binding"/>
    <property type="evidence" value="ECO:0007669"/>
    <property type="project" value="UniProtKB-KW"/>
</dbReference>
<dbReference type="Gene3D" id="1.10.10.1320">
    <property type="entry name" value="Anti-sigma factor, zinc-finger domain"/>
    <property type="match status" value="1"/>
</dbReference>
<dbReference type="InterPro" id="IPR041916">
    <property type="entry name" value="Anti_sigma_zinc_sf"/>
</dbReference>
<dbReference type="InterPro" id="IPR027383">
    <property type="entry name" value="Znf_put"/>
</dbReference>
<dbReference type="Pfam" id="PF13490">
    <property type="entry name" value="zf-HC2"/>
    <property type="match status" value="1"/>
</dbReference>
<reference key="1">
    <citation type="journal article" date="1997" name="Microbiology">
        <title>Sequence and analysis of a 31 kb segment of the Bacillus subtilis chromosome in the area of the rrnH and rrnG operons.</title>
        <authorList>
            <person name="Liu H."/>
            <person name="Haga K."/>
            <person name="Yasumoto K."/>
            <person name="Ohashi Y."/>
            <person name="Yoshikawa H."/>
            <person name="Takahashi H."/>
        </authorList>
    </citation>
    <scope>NUCLEOTIDE SEQUENCE [GENOMIC DNA]</scope>
    <source>
        <strain>168</strain>
    </source>
</reference>
<reference key="2">
    <citation type="journal article" date="1997" name="Nature">
        <title>The complete genome sequence of the Gram-positive bacterium Bacillus subtilis.</title>
        <authorList>
            <person name="Kunst F."/>
            <person name="Ogasawara N."/>
            <person name="Moszer I."/>
            <person name="Albertini A.M."/>
            <person name="Alloni G."/>
            <person name="Azevedo V."/>
            <person name="Bertero M.G."/>
            <person name="Bessieres P."/>
            <person name="Bolotin A."/>
            <person name="Borchert S."/>
            <person name="Borriss R."/>
            <person name="Boursier L."/>
            <person name="Brans A."/>
            <person name="Braun M."/>
            <person name="Brignell S.C."/>
            <person name="Bron S."/>
            <person name="Brouillet S."/>
            <person name="Bruschi C.V."/>
            <person name="Caldwell B."/>
            <person name="Capuano V."/>
            <person name="Carter N.M."/>
            <person name="Choi S.-K."/>
            <person name="Codani J.-J."/>
            <person name="Connerton I.F."/>
            <person name="Cummings N.J."/>
            <person name="Daniel R.A."/>
            <person name="Denizot F."/>
            <person name="Devine K.M."/>
            <person name="Duesterhoeft A."/>
            <person name="Ehrlich S.D."/>
            <person name="Emmerson P.T."/>
            <person name="Entian K.-D."/>
            <person name="Errington J."/>
            <person name="Fabret C."/>
            <person name="Ferrari E."/>
            <person name="Foulger D."/>
            <person name="Fritz C."/>
            <person name="Fujita M."/>
            <person name="Fujita Y."/>
            <person name="Fuma S."/>
            <person name="Galizzi A."/>
            <person name="Galleron N."/>
            <person name="Ghim S.-Y."/>
            <person name="Glaser P."/>
            <person name="Goffeau A."/>
            <person name="Golightly E.J."/>
            <person name="Grandi G."/>
            <person name="Guiseppi G."/>
            <person name="Guy B.J."/>
            <person name="Haga K."/>
            <person name="Haiech J."/>
            <person name="Harwood C.R."/>
            <person name="Henaut A."/>
            <person name="Hilbert H."/>
            <person name="Holsappel S."/>
            <person name="Hosono S."/>
            <person name="Hullo M.-F."/>
            <person name="Itaya M."/>
            <person name="Jones L.-M."/>
            <person name="Joris B."/>
            <person name="Karamata D."/>
            <person name="Kasahara Y."/>
            <person name="Klaerr-Blanchard M."/>
            <person name="Klein C."/>
            <person name="Kobayashi Y."/>
            <person name="Koetter P."/>
            <person name="Koningstein G."/>
            <person name="Krogh S."/>
            <person name="Kumano M."/>
            <person name="Kurita K."/>
            <person name="Lapidus A."/>
            <person name="Lardinois S."/>
            <person name="Lauber J."/>
            <person name="Lazarevic V."/>
            <person name="Lee S.-M."/>
            <person name="Levine A."/>
            <person name="Liu H."/>
            <person name="Masuda S."/>
            <person name="Mauel C."/>
            <person name="Medigue C."/>
            <person name="Medina N."/>
            <person name="Mellado R.P."/>
            <person name="Mizuno M."/>
            <person name="Moestl D."/>
            <person name="Nakai S."/>
            <person name="Noback M."/>
            <person name="Noone D."/>
            <person name="O'Reilly M."/>
            <person name="Ogawa K."/>
            <person name="Ogiwara A."/>
            <person name="Oudega B."/>
            <person name="Park S.-H."/>
            <person name="Parro V."/>
            <person name="Pohl T.M."/>
            <person name="Portetelle D."/>
            <person name="Porwollik S."/>
            <person name="Prescott A.M."/>
            <person name="Presecan E."/>
            <person name="Pujic P."/>
            <person name="Purnelle B."/>
            <person name="Rapoport G."/>
            <person name="Rey M."/>
            <person name="Reynolds S."/>
            <person name="Rieger M."/>
            <person name="Rivolta C."/>
            <person name="Rocha E."/>
            <person name="Roche B."/>
            <person name="Rose M."/>
            <person name="Sadaie Y."/>
            <person name="Sato T."/>
            <person name="Scanlan E."/>
            <person name="Schleich S."/>
            <person name="Schroeter R."/>
            <person name="Scoffone F."/>
            <person name="Sekiguchi J."/>
            <person name="Sekowska A."/>
            <person name="Seror S.J."/>
            <person name="Serror P."/>
            <person name="Shin B.-S."/>
            <person name="Soldo B."/>
            <person name="Sorokin A."/>
            <person name="Tacconi E."/>
            <person name="Takagi T."/>
            <person name="Takahashi H."/>
            <person name="Takemaru K."/>
            <person name="Takeuchi M."/>
            <person name="Tamakoshi A."/>
            <person name="Tanaka T."/>
            <person name="Terpstra P."/>
            <person name="Tognoni A."/>
            <person name="Tosato V."/>
            <person name="Uchiyama S."/>
            <person name="Vandenbol M."/>
            <person name="Vannier F."/>
            <person name="Vassarotti A."/>
            <person name="Viari A."/>
            <person name="Wambutt R."/>
            <person name="Wedler E."/>
            <person name="Wedler H."/>
            <person name="Weitzenegger T."/>
            <person name="Winters P."/>
            <person name="Wipat A."/>
            <person name="Yamamoto H."/>
            <person name="Yamane K."/>
            <person name="Yasumoto K."/>
            <person name="Yata K."/>
            <person name="Yoshida K."/>
            <person name="Yoshikawa H.-F."/>
            <person name="Zumstein E."/>
            <person name="Yoshikawa H."/>
            <person name="Danchin A."/>
        </authorList>
    </citation>
    <scope>NUCLEOTIDE SEQUENCE [LARGE SCALE GENOMIC DNA]</scope>
    <source>
        <strain>168</strain>
    </source>
</reference>
<reference key="3">
    <citation type="journal article" date="2001" name="J. Bacteriol.">
        <title>Global analysis of the general stress response of Bacillus subtilis.</title>
        <authorList>
            <person name="Petersohn A."/>
            <person name="Brigulla M."/>
            <person name="Haas S."/>
            <person name="Hoheisel J.D."/>
            <person name="Voelker U."/>
            <person name="Hecker M."/>
        </authorList>
    </citation>
    <scope>FUNCTION</scope>
    <scope>INDUCTION</scope>
</reference>
<reference key="4">
    <citation type="journal article" date="2001" name="Mol. Microbiol.">
        <title>Alkaline shock induces the Bacillus subtilis sigma(W) regulon.</title>
        <authorList>
            <person name="Wiegert T."/>
            <person name="Homuth G."/>
            <person name="Versteeg S."/>
            <person name="Schumann W."/>
        </authorList>
    </citation>
    <scope>INDUCTION</scope>
    <source>
        <strain>168</strain>
    </source>
</reference>
<reference key="5">
    <citation type="journal article" date="2002" name="Mol. Microbiol.">
        <title>Antibiotics that inhibit cell wall biosynthesis induce expression of the Bacillus subtilis sigma(W) and sigma(M) regulons.</title>
        <authorList>
            <person name="Cao M."/>
            <person name="Wang T."/>
            <person name="Ye R."/>
            <person name="Helmann J.D."/>
        </authorList>
    </citation>
    <scope>INDUCTION</scope>
</reference>
<reference key="6">
    <citation type="journal article" date="2004" name="Mol. Microbiol.">
        <title>The Bacillus subtilis sigmaW anti-sigma factor RsiW is degraded by intramembrane proteolysis through YluC.</title>
        <authorList>
            <person name="Schoebel S."/>
            <person name="Zellmeier S."/>
            <person name="Schumann W."/>
            <person name="Wiegert T."/>
        </authorList>
    </citation>
    <scope>FUNCTION</scope>
    <scope>CLEAVAGE BY RASP</scope>
    <scope>DOMAIN</scope>
    <scope>TOPOLOGY</scope>
</reference>
<reference key="7">
    <citation type="journal article" date="2005" name="Microbiology">
        <title>Cationic antimicrobial peptides elicit a complex stress response in Bacillus subtilis that involves ECF-type sigma factors and two-component signal transduction systems.</title>
        <authorList>
            <person name="Pietiaeinen M."/>
            <person name="Gardemeister M."/>
            <person name="Mecklin M."/>
            <person name="Leskelae S."/>
            <person name="Sarvas M."/>
            <person name="Kontinen V.P."/>
        </authorList>
    </citation>
    <scope>INDUCTION</scope>
</reference>
<reference key="8">
    <citation type="journal article" date="2006" name="Genes Dev.">
        <title>Evidence for a novel protease governing regulated intramembrane proteolysis and resistance to antimicrobial peptides in Bacillus subtilis.</title>
        <authorList>
            <person name="Ellermeier C.D."/>
            <person name="Losick R."/>
        </authorList>
    </citation>
    <scope>CLEAVAGE BY PRSW</scope>
</reference>
<reference key="9">
    <citation type="journal article" date="2006" name="Mol. Microbiol.">
        <title>YpdC determines site-1 degradation in regulated intramembrane proteolysis of the RsiW anti-sigma factor of Bacillus subtilis.</title>
        <authorList>
            <person name="Heinrich J."/>
            <person name="Wiegert T."/>
        </authorList>
    </citation>
    <scope>CLEAVAGE BY PRSW</scope>
    <source>
        <strain>1012</strain>
    </source>
</reference>
<reference key="10">
    <citation type="journal article" date="2006" name="Mol. Microbiol.">
        <title>Involvement of Clp protease activity in modulating the Bacillus subtilis sigma-W stress response.</title>
        <authorList>
            <person name="Zellmeier S."/>
            <person name="Schumann W."/>
            <person name="Wiegert T."/>
        </authorList>
    </citation>
    <scope>CLEAVAGE BY CPLXP</scope>
    <scope>MUTAGENESIS OF ALA-91; 91-ALA-ALA-92; 91-ALA--ALA-93 AND 91-ALA--ALA-94</scope>
    <scope>SUBCELLULAR LOCATION OF SITE-2 CLIPPED RSIW</scope>
</reference>
<reference key="11">
    <citation type="journal article" date="2009" name="Mol. Microbiol.">
        <title>Two proteolytic modules are involved in regulated intramembrane proteolysis of Bacillus subtilis RsiW.</title>
        <authorList>
            <person name="Heinrich J."/>
            <person name="Hein K."/>
            <person name="Wiegert T."/>
        </authorList>
    </citation>
    <scope>CLEAVAGE BY PRSW AND RASP</scope>
    <scope>MUTAGENESIS OF SER-117; VAL-129; GLY-146; ALA-168; SER-169; GLY-175; 188-TRP--GLU-208; 198-LEU--GLU-208 AND 204-PRO--GLU-208</scope>
    <source>
        <strain>1012</strain>
    </source>
</reference>
<reference key="12">
    <citation type="journal article" date="2011" name="Nucleic Acids Res.">
        <title>Determinants of redox sensitivity in RsrA, a zinc-containing anti-sigma factor for regulating thiol oxidative stress response.</title>
        <authorList>
            <person name="Jung Y.G."/>
            <person name="Cho Y.B."/>
            <person name="Kim M.S."/>
            <person name="Yoo J.S."/>
            <person name="Hong S.H."/>
            <person name="Roe J.H."/>
        </authorList>
    </citation>
    <scope>FUNCTION AS AN ANTI-SIGMA FACTOR</scope>
    <scope>MUTAGENESIS OF 26-VAL--HIS-40</scope>
</reference>
<reference evidence="16 17" key="13">
    <citation type="journal article" date="2017" name="PLoS ONE">
        <title>Structural insights into the regulation of Bacillus subtilis SigW activity by anti-sigma RsiW.</title>
        <authorList>
            <person name="Devkota S.R."/>
            <person name="Kwon E."/>
            <person name="Ha S.C."/>
            <person name="Chang H.W."/>
            <person name="Kim D.Y."/>
        </authorList>
    </citation>
    <scope>X-RAY CRYSTALLOGRAPHY (2.80 ANGSTROMS) OF 1-80 IN COMPLEX WITH REDUCED AND OXIDIZED SIGW</scope>
    <scope>COFACTOR</scope>
    <scope>SUBUNIT</scope>
    <scope>DOMAIN</scope>
    <source>
        <strain>168</strain>
    </source>
</reference>